<proteinExistence type="inferred from homology"/>
<evidence type="ECO:0000250" key="1"/>
<evidence type="ECO:0000255" key="2">
    <source>
        <dbReference type="HAMAP-Rule" id="MF_00768"/>
    </source>
</evidence>
<protein>
    <recommendedName>
        <fullName evidence="2">HTH-type transcriptional regulator BetI</fullName>
    </recommendedName>
</protein>
<keyword id="KW-0238">DNA-binding</keyword>
<keyword id="KW-0678">Repressor</keyword>
<keyword id="KW-0804">Transcription</keyword>
<keyword id="KW-0805">Transcription regulation</keyword>
<organism>
    <name type="scientific">Yersinia pestis bv. Antiqua (strain Nepal516)</name>
    <dbReference type="NCBI Taxonomy" id="377628"/>
    <lineage>
        <taxon>Bacteria</taxon>
        <taxon>Pseudomonadati</taxon>
        <taxon>Pseudomonadota</taxon>
        <taxon>Gammaproteobacteria</taxon>
        <taxon>Enterobacterales</taxon>
        <taxon>Yersiniaceae</taxon>
        <taxon>Yersinia</taxon>
    </lineage>
</organism>
<gene>
    <name evidence="2" type="primary">betI</name>
    <name type="ordered locus">YPN_2834</name>
    <name type="ORF">YP516_3204</name>
</gene>
<reference key="1">
    <citation type="journal article" date="2006" name="J. Bacteriol.">
        <title>Complete genome sequence of Yersinia pestis strains Antiqua and Nepal516: evidence of gene reduction in an emerging pathogen.</title>
        <authorList>
            <person name="Chain P.S.G."/>
            <person name="Hu P."/>
            <person name="Malfatti S.A."/>
            <person name="Radnedge L."/>
            <person name="Larimer F."/>
            <person name="Vergez L.M."/>
            <person name="Worsham P."/>
            <person name="Chu M.C."/>
            <person name="Andersen G.L."/>
        </authorList>
    </citation>
    <scope>NUCLEOTIDE SEQUENCE [LARGE SCALE GENOMIC DNA]</scope>
    <source>
        <strain>Nepal516</strain>
    </source>
</reference>
<reference key="2">
    <citation type="submission" date="2009-04" db="EMBL/GenBank/DDBJ databases">
        <title>Yersinia pestis Nepal516A whole genome shotgun sequencing project.</title>
        <authorList>
            <person name="Plunkett G. III"/>
            <person name="Anderson B.D."/>
            <person name="Baumler D.J."/>
            <person name="Burland V."/>
            <person name="Cabot E.L."/>
            <person name="Glasner J.D."/>
            <person name="Mau B."/>
            <person name="Neeno-Eckwall E."/>
            <person name="Perna N.T."/>
            <person name="Munk A.C."/>
            <person name="Tapia R."/>
            <person name="Green L.D."/>
            <person name="Rogers Y.C."/>
            <person name="Detter J.C."/>
            <person name="Bruce D.C."/>
            <person name="Brettin T.S."/>
        </authorList>
    </citation>
    <scope>NUCLEOTIDE SEQUENCE [LARGE SCALE GENOMIC DNA]</scope>
    <source>
        <strain>Nepal516</strain>
    </source>
</reference>
<sequence length="198" mass="22428">MPKVGMQPIRRQQLIEATMAAVNEVGMHEASIAQIAKRAGVSNGIISHYFRDKNGLLEATMRYLIRHLGEAVKQHLAALSVNDPRARLRAIAEGNFDDSQINSAAMKTWLAFWASSMHSPQLYRLQQVNNRRLYSNLCAEFKRCLPREQAQLAAKGMAGLIDGLWLRSALSGEHFNRQEALLIIHNYIEQQLNIKYKC</sequence>
<accession>Q1CFR9</accession>
<accession>C4GWK4</accession>
<comment type="function">
    <text evidence="1">Repressor involved in the biosynthesis of the osmoprotectant glycine betaine. It represses transcription of the choline transporter BetT and the genes of BetAB involved in the synthesis of glycine betaine (By similarity).</text>
</comment>
<comment type="pathway">
    <text>Amine and polyamine biosynthesis; betaine biosynthesis via choline pathway [regulation].</text>
</comment>
<name>BETI_YERPN</name>
<feature type="chain" id="PRO_0000257743" description="HTH-type transcriptional regulator BetI">
    <location>
        <begin position="1"/>
        <end position="198"/>
    </location>
</feature>
<feature type="domain" description="HTH tetR-type" evidence="2">
    <location>
        <begin position="8"/>
        <end position="68"/>
    </location>
</feature>
<feature type="DNA-binding region" description="H-T-H motif" evidence="2">
    <location>
        <begin position="31"/>
        <end position="50"/>
    </location>
</feature>
<dbReference type="EMBL" id="CP000305">
    <property type="protein sequence ID" value="ABG19161.1"/>
    <property type="molecule type" value="Genomic_DNA"/>
</dbReference>
<dbReference type="EMBL" id="ACNQ01000017">
    <property type="protein sequence ID" value="EEO75304.1"/>
    <property type="molecule type" value="Genomic_DNA"/>
</dbReference>
<dbReference type="RefSeq" id="WP_002218278.1">
    <property type="nucleotide sequence ID" value="NZ_ACNQ01000017.1"/>
</dbReference>
<dbReference type="SMR" id="Q1CFR9"/>
<dbReference type="GeneID" id="57977306"/>
<dbReference type="KEGG" id="ypn:YPN_2834"/>
<dbReference type="HOGENOM" id="CLU_069356_15_4_6"/>
<dbReference type="UniPathway" id="UPA00529"/>
<dbReference type="Proteomes" id="UP000008936">
    <property type="component" value="Chromosome"/>
</dbReference>
<dbReference type="GO" id="GO:0003700">
    <property type="term" value="F:DNA-binding transcription factor activity"/>
    <property type="evidence" value="ECO:0007669"/>
    <property type="project" value="UniProtKB-UniRule"/>
</dbReference>
<dbReference type="GO" id="GO:0000976">
    <property type="term" value="F:transcription cis-regulatory region binding"/>
    <property type="evidence" value="ECO:0007669"/>
    <property type="project" value="TreeGrafter"/>
</dbReference>
<dbReference type="GO" id="GO:0019285">
    <property type="term" value="P:glycine betaine biosynthetic process from choline"/>
    <property type="evidence" value="ECO:0007669"/>
    <property type="project" value="UniProtKB-UniRule"/>
</dbReference>
<dbReference type="GO" id="GO:0045892">
    <property type="term" value="P:negative regulation of DNA-templated transcription"/>
    <property type="evidence" value="ECO:0007669"/>
    <property type="project" value="UniProtKB-UniRule"/>
</dbReference>
<dbReference type="Gene3D" id="1.10.357.10">
    <property type="entry name" value="Tetracycline Repressor, domain 2"/>
    <property type="match status" value="1"/>
</dbReference>
<dbReference type="HAMAP" id="MF_00768">
    <property type="entry name" value="HTH_type_BetI"/>
    <property type="match status" value="1"/>
</dbReference>
<dbReference type="InterPro" id="IPR039538">
    <property type="entry name" value="BetI_C"/>
</dbReference>
<dbReference type="InterPro" id="IPR023772">
    <property type="entry name" value="DNA-bd_HTH_TetR-type_CS"/>
</dbReference>
<dbReference type="InterPro" id="IPR009057">
    <property type="entry name" value="Homeodomain-like_sf"/>
</dbReference>
<dbReference type="InterPro" id="IPR050109">
    <property type="entry name" value="HTH-type_TetR-like_transc_reg"/>
</dbReference>
<dbReference type="InterPro" id="IPR001647">
    <property type="entry name" value="HTH_TetR"/>
</dbReference>
<dbReference type="InterPro" id="IPR036271">
    <property type="entry name" value="Tet_transcr_reg_TetR-rel_C_sf"/>
</dbReference>
<dbReference type="InterPro" id="IPR017757">
    <property type="entry name" value="Tscrpt_rep_BetI"/>
</dbReference>
<dbReference type="NCBIfam" id="TIGR03384">
    <property type="entry name" value="betaine_BetI"/>
    <property type="match status" value="1"/>
</dbReference>
<dbReference type="NCBIfam" id="NF001978">
    <property type="entry name" value="PRK00767.1"/>
    <property type="match status" value="1"/>
</dbReference>
<dbReference type="PANTHER" id="PTHR30055:SF234">
    <property type="entry name" value="HTH-TYPE TRANSCRIPTIONAL REGULATOR BETI"/>
    <property type="match status" value="1"/>
</dbReference>
<dbReference type="PANTHER" id="PTHR30055">
    <property type="entry name" value="HTH-TYPE TRANSCRIPTIONAL REGULATOR RUTR"/>
    <property type="match status" value="1"/>
</dbReference>
<dbReference type="Pfam" id="PF13977">
    <property type="entry name" value="TetR_C_6"/>
    <property type="match status" value="1"/>
</dbReference>
<dbReference type="Pfam" id="PF00440">
    <property type="entry name" value="TetR_N"/>
    <property type="match status" value="1"/>
</dbReference>
<dbReference type="PRINTS" id="PR00455">
    <property type="entry name" value="HTHTETR"/>
</dbReference>
<dbReference type="SUPFAM" id="SSF46689">
    <property type="entry name" value="Homeodomain-like"/>
    <property type="match status" value="1"/>
</dbReference>
<dbReference type="SUPFAM" id="SSF48498">
    <property type="entry name" value="Tetracyclin repressor-like, C-terminal domain"/>
    <property type="match status" value="1"/>
</dbReference>
<dbReference type="PROSITE" id="PS01081">
    <property type="entry name" value="HTH_TETR_1"/>
    <property type="match status" value="1"/>
</dbReference>
<dbReference type="PROSITE" id="PS50977">
    <property type="entry name" value="HTH_TETR_2"/>
    <property type="match status" value="1"/>
</dbReference>